<comment type="catalytic activity">
    <reaction>
        <text>D-glyceraldehyde 3-phosphate = dihydroxyacetone phosphate</text>
        <dbReference type="Rhea" id="RHEA:18585"/>
        <dbReference type="ChEBI" id="CHEBI:57642"/>
        <dbReference type="ChEBI" id="CHEBI:59776"/>
        <dbReference type="EC" id="5.3.1.1"/>
    </reaction>
</comment>
<comment type="pathway">
    <text>Carbohydrate biosynthesis; gluconeogenesis.</text>
</comment>
<comment type="pathway">
    <text>Carbohydrate degradation; glycolysis; D-glyceraldehyde 3-phosphate from glycerone phosphate: step 1/1.</text>
</comment>
<comment type="subunit">
    <text evidence="1">Homodimer.</text>
</comment>
<comment type="subcellular location">
    <subcellularLocation>
        <location evidence="2">Cytoplasm</location>
    </subcellularLocation>
</comment>
<comment type="tissue specificity">
    <text>Higher levels found in leaves than in roots.</text>
</comment>
<comment type="miscellaneous">
    <text>In plants, there are two types of TPIS, cytosolic and plastid.</text>
</comment>
<comment type="similarity">
    <text evidence="2">Belongs to the triosephosphate isomerase family.</text>
</comment>
<feature type="chain" id="PRO_0000090155" description="Triosephosphate isomerase, cytosolic">
    <location>
        <begin position="1"/>
        <end position="257"/>
    </location>
</feature>
<feature type="active site" description="Electrophile" evidence="1">
    <location>
        <position position="96"/>
    </location>
</feature>
<feature type="active site" description="Proton acceptor" evidence="1">
    <location>
        <position position="167"/>
    </location>
</feature>
<feature type="binding site" evidence="1">
    <location>
        <position position="10"/>
    </location>
    <ligand>
        <name>substrate</name>
    </ligand>
</feature>
<feature type="binding site" evidence="1">
    <location>
        <position position="12"/>
    </location>
    <ligand>
        <name>substrate</name>
    </ligand>
</feature>
<proteinExistence type="evidence at transcript level"/>
<reference key="1">
    <citation type="journal article" date="1994" name="Genome">
        <title>Triose phosphate isomerase of Stellaria longipes (Caryophyllaceae).</title>
        <authorList>
            <person name="Zhang X.-H."/>
            <person name="Chinnappa C.C."/>
        </authorList>
    </citation>
    <scope>NUCLEOTIDE SEQUENCE [MRNA]</scope>
    <source>
        <strain>cv. Goldie</strain>
        <tissue>Leaf</tissue>
    </source>
</reference>
<gene>
    <name type="primary">TPI</name>
</gene>
<keyword id="KW-0963">Cytoplasm</keyword>
<keyword id="KW-0312">Gluconeogenesis</keyword>
<keyword id="KW-0324">Glycolysis</keyword>
<keyword id="KW-0413">Isomerase</keyword>
<evidence type="ECO:0000250" key="1"/>
<evidence type="ECO:0000305" key="2"/>
<dbReference type="EC" id="5.3.1.1"/>
<dbReference type="EMBL" id="S70730">
    <property type="protein sequence ID" value="AAB30759.1"/>
    <property type="molecule type" value="mRNA"/>
</dbReference>
<dbReference type="SMR" id="P48497"/>
<dbReference type="UniPathway" id="UPA00109">
    <property type="reaction ID" value="UER00189"/>
</dbReference>
<dbReference type="UniPathway" id="UPA00138"/>
<dbReference type="GO" id="GO:0005829">
    <property type="term" value="C:cytosol"/>
    <property type="evidence" value="ECO:0007669"/>
    <property type="project" value="TreeGrafter"/>
</dbReference>
<dbReference type="GO" id="GO:0004807">
    <property type="term" value="F:triose-phosphate isomerase activity"/>
    <property type="evidence" value="ECO:0007669"/>
    <property type="project" value="UniProtKB-EC"/>
</dbReference>
<dbReference type="GO" id="GO:0006094">
    <property type="term" value="P:gluconeogenesis"/>
    <property type="evidence" value="ECO:0007669"/>
    <property type="project" value="UniProtKB-UniPathway"/>
</dbReference>
<dbReference type="GO" id="GO:0046166">
    <property type="term" value="P:glyceraldehyde-3-phosphate biosynthetic process"/>
    <property type="evidence" value="ECO:0007669"/>
    <property type="project" value="TreeGrafter"/>
</dbReference>
<dbReference type="GO" id="GO:0019563">
    <property type="term" value="P:glycerol catabolic process"/>
    <property type="evidence" value="ECO:0007669"/>
    <property type="project" value="TreeGrafter"/>
</dbReference>
<dbReference type="GO" id="GO:0006096">
    <property type="term" value="P:glycolytic process"/>
    <property type="evidence" value="ECO:0007669"/>
    <property type="project" value="UniProtKB-UniPathway"/>
</dbReference>
<dbReference type="CDD" id="cd00311">
    <property type="entry name" value="TIM"/>
    <property type="match status" value="1"/>
</dbReference>
<dbReference type="FunFam" id="3.20.20.70:FF:000025">
    <property type="entry name" value="Triosephosphate isomerase"/>
    <property type="match status" value="1"/>
</dbReference>
<dbReference type="Gene3D" id="3.20.20.70">
    <property type="entry name" value="Aldolase class I"/>
    <property type="match status" value="1"/>
</dbReference>
<dbReference type="HAMAP" id="MF_00147_B">
    <property type="entry name" value="TIM_B"/>
    <property type="match status" value="1"/>
</dbReference>
<dbReference type="InterPro" id="IPR013785">
    <property type="entry name" value="Aldolase_TIM"/>
</dbReference>
<dbReference type="InterPro" id="IPR035990">
    <property type="entry name" value="TIM_sf"/>
</dbReference>
<dbReference type="InterPro" id="IPR022896">
    <property type="entry name" value="TrioseP_Isoase_bac/euk"/>
</dbReference>
<dbReference type="InterPro" id="IPR000652">
    <property type="entry name" value="Triosephosphate_isomerase"/>
</dbReference>
<dbReference type="InterPro" id="IPR020861">
    <property type="entry name" value="Triosephosphate_isomerase_AS"/>
</dbReference>
<dbReference type="NCBIfam" id="TIGR00419">
    <property type="entry name" value="tim"/>
    <property type="match status" value="1"/>
</dbReference>
<dbReference type="PANTHER" id="PTHR21139">
    <property type="entry name" value="TRIOSEPHOSPHATE ISOMERASE"/>
    <property type="match status" value="1"/>
</dbReference>
<dbReference type="PANTHER" id="PTHR21139:SF34">
    <property type="entry name" value="TRIOSEPHOSPHATE ISOMERASE, CYTOSOLIC"/>
    <property type="match status" value="1"/>
</dbReference>
<dbReference type="Pfam" id="PF00121">
    <property type="entry name" value="TIM"/>
    <property type="match status" value="1"/>
</dbReference>
<dbReference type="SUPFAM" id="SSF51351">
    <property type="entry name" value="Triosephosphate isomerase (TIM)"/>
    <property type="match status" value="1"/>
</dbReference>
<dbReference type="PROSITE" id="PS00171">
    <property type="entry name" value="TIM_1"/>
    <property type="match status" value="1"/>
</dbReference>
<dbReference type="PROSITE" id="PS51440">
    <property type="entry name" value="TIM_2"/>
    <property type="match status" value="1"/>
</dbReference>
<sequence length="257" mass="27499">MGRKFFVGGNWKCNGTQESVSKIVDTLNEPTIAANDVVTVVVSPPYVFLPDENAELKHEIQVAAQNCWVKKGGAFTGEVSAQMLANLGITWVILGHSERRTLLGESNEFVGKKAAYAQSEGLGVIACIGELLEEREAGKTFDVCFKQLKSFARFPAKPWDNVVVAYEPVWAIGTGKVASPEQAQEVHVAVRDWLKTNVSEEVASKTRIIYGGSVNGGNSLALAAQEDVDGFLVGGASLKGPEFATIINSVTAKKVAA</sequence>
<protein>
    <recommendedName>
        <fullName>Triosephosphate isomerase, cytosolic</fullName>
        <shortName>TIM</shortName>
        <shortName>Triose-phosphate isomerase</shortName>
        <ecNumber>5.3.1.1</ecNumber>
    </recommendedName>
</protein>
<organism>
    <name type="scientific">Stellaria longipes</name>
    <name type="common">Longstalk starwort</name>
    <name type="synonym">Alsine longipes</name>
    <dbReference type="NCBI Taxonomy" id="19744"/>
    <lineage>
        <taxon>Eukaryota</taxon>
        <taxon>Viridiplantae</taxon>
        <taxon>Streptophyta</taxon>
        <taxon>Embryophyta</taxon>
        <taxon>Tracheophyta</taxon>
        <taxon>Spermatophyta</taxon>
        <taxon>Magnoliopsida</taxon>
        <taxon>eudicotyledons</taxon>
        <taxon>Gunneridae</taxon>
        <taxon>Pentapetalae</taxon>
        <taxon>Caryophyllales</taxon>
        <taxon>Caryophyllaceae</taxon>
        <taxon>Alsineae</taxon>
        <taxon>Stellaria</taxon>
    </lineage>
</organism>
<accession>P48497</accession>
<name>TPIS_STELP</name>